<sequence>MLKRTSFVSSLFISSAVLLSILLPSGQAHAQSASIEAKTVNSTKEWTISDIEVTYKPNAVLSLGAVEFQFPDGFHATTRDSVNGRTLKETQILNDGKTVRLPLTLDLLGASEFDLVMVRKTLPRAGTYTIKGDVVNGLGIGSFYAETQLVIDPR</sequence>
<name>BSLB_BACSU</name>
<protein>
    <recommendedName>
        <fullName evidence="3">Probable biofilm-surface layer protein B</fullName>
    </recommendedName>
</protein>
<dbReference type="EMBL" id="X73124">
    <property type="protein sequence ID" value="CAA51630.1"/>
    <property type="molecule type" value="Genomic_DNA"/>
</dbReference>
<dbReference type="EMBL" id="AL009126">
    <property type="protein sequence ID" value="CAB15807.1"/>
    <property type="molecule type" value="Genomic_DNA"/>
</dbReference>
<dbReference type="PIR" id="S39729">
    <property type="entry name" value="S39729"/>
</dbReference>
<dbReference type="RefSeq" id="NP_391660.1">
    <property type="nucleotide sequence ID" value="NC_000964.3"/>
</dbReference>
<dbReference type="RefSeq" id="WP_003242493.1">
    <property type="nucleotide sequence ID" value="NZ_OZ025638.1"/>
</dbReference>
<dbReference type="PDB" id="5MKD">
    <property type="method" value="X-ray"/>
    <property type="resolution" value="2.51 A"/>
    <property type="chains" value="A/B/C/D=31-154"/>
</dbReference>
<dbReference type="PDBsum" id="5MKD"/>
<dbReference type="SMR" id="P39632"/>
<dbReference type="FunCoup" id="P39632">
    <property type="interactions" value="247"/>
</dbReference>
<dbReference type="STRING" id="224308.BSU37800"/>
<dbReference type="PaxDb" id="224308-BSU37800"/>
<dbReference type="DNASU" id="937223"/>
<dbReference type="EnsemblBacteria" id="CAB15807">
    <property type="protein sequence ID" value="CAB15807"/>
    <property type="gene ID" value="BSU_37800"/>
</dbReference>
<dbReference type="GeneID" id="937223"/>
<dbReference type="KEGG" id="bsu:BSU37800"/>
<dbReference type="PATRIC" id="fig|224308.179.peg.4093"/>
<dbReference type="eggNOG" id="ENOG502ZUCW">
    <property type="taxonomic scope" value="Bacteria"/>
</dbReference>
<dbReference type="InParanoid" id="P39632"/>
<dbReference type="OrthoDB" id="2928595at2"/>
<dbReference type="BioCyc" id="BSUB:BSU37800-MONOMER"/>
<dbReference type="Proteomes" id="UP000001570">
    <property type="component" value="Chromosome"/>
</dbReference>
<dbReference type="GO" id="GO:0005576">
    <property type="term" value="C:extracellular region"/>
    <property type="evidence" value="ECO:0007669"/>
    <property type="project" value="UniProtKB-SubCell"/>
</dbReference>
<dbReference type="CDD" id="cd14670">
    <property type="entry name" value="BslA_like"/>
    <property type="match status" value="1"/>
</dbReference>
<dbReference type="Gene3D" id="2.60.40.3490">
    <property type="match status" value="1"/>
</dbReference>
<dbReference type="InterPro" id="IPR049715">
    <property type="entry name" value="BslB-like"/>
</dbReference>
<dbReference type="InterPro" id="IPR034650">
    <property type="entry name" value="YuaB-like"/>
</dbReference>
<dbReference type="InterPro" id="IPR038480">
    <property type="entry name" value="YuaB-like_sf"/>
</dbReference>
<dbReference type="NCBIfam" id="NF041828">
    <property type="entry name" value="hydrophobin_BslB"/>
    <property type="match status" value="1"/>
</dbReference>
<dbReference type="Pfam" id="PF17735">
    <property type="entry name" value="BslA"/>
    <property type="match status" value="1"/>
</dbReference>
<comment type="function">
    <text evidence="2">Has a minor role in biofilm architecture. May contribute to the surface hydrophobicity.</text>
</comment>
<comment type="subunit">
    <text evidence="2">Monomer in vitro.</text>
</comment>
<comment type="subcellular location">
    <subcellularLocation>
        <location evidence="3">Secreted</location>
    </subcellularLocation>
</comment>
<comment type="similarity">
    <text evidence="3">Belongs to the BslA/BslB family.</text>
</comment>
<keyword id="KW-0002">3D-structure</keyword>
<keyword id="KW-1185">Reference proteome</keyword>
<keyword id="KW-0964">Secreted</keyword>
<keyword id="KW-0732">Signal</keyword>
<reference key="1">
    <citation type="journal article" date="1993" name="Mol. Microbiol.">
        <title>Bacillus subtilis genome project: cloning and sequencing of the 97 kb region from 325 degrees to 333 degrees.</title>
        <authorList>
            <person name="Glaser P."/>
            <person name="Kunst F."/>
            <person name="Arnaud M."/>
            <person name="Coudart M.P."/>
            <person name="Gonzales W."/>
            <person name="Hullo M.-F."/>
            <person name="Ionescu M."/>
            <person name="Lubochinsky B."/>
            <person name="Marcelino L."/>
            <person name="Moszer I."/>
            <person name="Presecan E."/>
            <person name="Santana M."/>
            <person name="Schneider E."/>
            <person name="Schweizer J."/>
            <person name="Vertes A."/>
            <person name="Rapoport G."/>
            <person name="Danchin A."/>
        </authorList>
    </citation>
    <scope>NUCLEOTIDE SEQUENCE [GENOMIC DNA]</scope>
    <source>
        <strain>168</strain>
    </source>
</reference>
<reference key="2">
    <citation type="journal article" date="1997" name="Nature">
        <title>The complete genome sequence of the Gram-positive bacterium Bacillus subtilis.</title>
        <authorList>
            <person name="Kunst F."/>
            <person name="Ogasawara N."/>
            <person name="Moszer I."/>
            <person name="Albertini A.M."/>
            <person name="Alloni G."/>
            <person name="Azevedo V."/>
            <person name="Bertero M.G."/>
            <person name="Bessieres P."/>
            <person name="Bolotin A."/>
            <person name="Borchert S."/>
            <person name="Borriss R."/>
            <person name="Boursier L."/>
            <person name="Brans A."/>
            <person name="Braun M."/>
            <person name="Brignell S.C."/>
            <person name="Bron S."/>
            <person name="Brouillet S."/>
            <person name="Bruschi C.V."/>
            <person name="Caldwell B."/>
            <person name="Capuano V."/>
            <person name="Carter N.M."/>
            <person name="Choi S.-K."/>
            <person name="Codani J.-J."/>
            <person name="Connerton I.F."/>
            <person name="Cummings N.J."/>
            <person name="Daniel R.A."/>
            <person name="Denizot F."/>
            <person name="Devine K.M."/>
            <person name="Duesterhoeft A."/>
            <person name="Ehrlich S.D."/>
            <person name="Emmerson P.T."/>
            <person name="Entian K.-D."/>
            <person name="Errington J."/>
            <person name="Fabret C."/>
            <person name="Ferrari E."/>
            <person name="Foulger D."/>
            <person name="Fritz C."/>
            <person name="Fujita M."/>
            <person name="Fujita Y."/>
            <person name="Fuma S."/>
            <person name="Galizzi A."/>
            <person name="Galleron N."/>
            <person name="Ghim S.-Y."/>
            <person name="Glaser P."/>
            <person name="Goffeau A."/>
            <person name="Golightly E.J."/>
            <person name="Grandi G."/>
            <person name="Guiseppi G."/>
            <person name="Guy B.J."/>
            <person name="Haga K."/>
            <person name="Haiech J."/>
            <person name="Harwood C.R."/>
            <person name="Henaut A."/>
            <person name="Hilbert H."/>
            <person name="Holsappel S."/>
            <person name="Hosono S."/>
            <person name="Hullo M.-F."/>
            <person name="Itaya M."/>
            <person name="Jones L.-M."/>
            <person name="Joris B."/>
            <person name="Karamata D."/>
            <person name="Kasahara Y."/>
            <person name="Klaerr-Blanchard M."/>
            <person name="Klein C."/>
            <person name="Kobayashi Y."/>
            <person name="Koetter P."/>
            <person name="Koningstein G."/>
            <person name="Krogh S."/>
            <person name="Kumano M."/>
            <person name="Kurita K."/>
            <person name="Lapidus A."/>
            <person name="Lardinois S."/>
            <person name="Lauber J."/>
            <person name="Lazarevic V."/>
            <person name="Lee S.-M."/>
            <person name="Levine A."/>
            <person name="Liu H."/>
            <person name="Masuda S."/>
            <person name="Mauel C."/>
            <person name="Medigue C."/>
            <person name="Medina N."/>
            <person name="Mellado R.P."/>
            <person name="Mizuno M."/>
            <person name="Moestl D."/>
            <person name="Nakai S."/>
            <person name="Noback M."/>
            <person name="Noone D."/>
            <person name="O'Reilly M."/>
            <person name="Ogawa K."/>
            <person name="Ogiwara A."/>
            <person name="Oudega B."/>
            <person name="Park S.-H."/>
            <person name="Parro V."/>
            <person name="Pohl T.M."/>
            <person name="Portetelle D."/>
            <person name="Porwollik S."/>
            <person name="Prescott A.M."/>
            <person name="Presecan E."/>
            <person name="Pujic P."/>
            <person name="Purnelle B."/>
            <person name="Rapoport G."/>
            <person name="Rey M."/>
            <person name="Reynolds S."/>
            <person name="Rieger M."/>
            <person name="Rivolta C."/>
            <person name="Rocha E."/>
            <person name="Roche B."/>
            <person name="Rose M."/>
            <person name="Sadaie Y."/>
            <person name="Sato T."/>
            <person name="Scanlan E."/>
            <person name="Schleich S."/>
            <person name="Schroeter R."/>
            <person name="Scoffone F."/>
            <person name="Sekiguchi J."/>
            <person name="Sekowska A."/>
            <person name="Seror S.J."/>
            <person name="Serror P."/>
            <person name="Shin B.-S."/>
            <person name="Soldo B."/>
            <person name="Sorokin A."/>
            <person name="Tacconi E."/>
            <person name="Takagi T."/>
            <person name="Takahashi H."/>
            <person name="Takemaru K."/>
            <person name="Takeuchi M."/>
            <person name="Tamakoshi A."/>
            <person name="Tanaka T."/>
            <person name="Terpstra P."/>
            <person name="Tognoni A."/>
            <person name="Tosato V."/>
            <person name="Uchiyama S."/>
            <person name="Vandenbol M."/>
            <person name="Vannier F."/>
            <person name="Vassarotti A."/>
            <person name="Viari A."/>
            <person name="Wambutt R."/>
            <person name="Wedler E."/>
            <person name="Wedler H."/>
            <person name="Weitzenegger T."/>
            <person name="Winters P."/>
            <person name="Wipat A."/>
            <person name="Yamamoto H."/>
            <person name="Yamane K."/>
            <person name="Yasumoto K."/>
            <person name="Yata K."/>
            <person name="Yoshida K."/>
            <person name="Yoshikawa H.-F."/>
            <person name="Zumstein E."/>
            <person name="Yoshikawa H."/>
            <person name="Danchin A."/>
        </authorList>
    </citation>
    <scope>NUCLEOTIDE SEQUENCE [LARGE SCALE GENOMIC DNA]</scope>
    <source>
        <strain>168</strain>
    </source>
</reference>
<reference key="3">
    <citation type="journal article" date="2017" name="Sci. Rep.">
        <title>Natural variations in the biofilm-associated protein BslA from the genus Bacillus.</title>
        <authorList>
            <person name="Morris R.J."/>
            <person name="Schor M."/>
            <person name="Gillespie R.M.C."/>
            <person name="Ferreira A.S."/>
            <person name="Baldauf L."/>
            <person name="Earl C."/>
            <person name="Ostrowski A."/>
            <person name="Hobley L."/>
            <person name="Bromley K.M."/>
            <person name="Sukhodub T."/>
            <person name="Arnaouteli S."/>
            <person name="Stanley-Wall N.R."/>
            <person name="MacPhee C.E."/>
        </authorList>
    </citation>
    <scope>FUNCTION</scope>
    <scope>SUBUNIT</scope>
</reference>
<reference evidence="5" key="4">
    <citation type="submission" date="2016-12" db="PDB data bank">
        <title>Crystal structure of Bacillus subtilis Ywea.</title>
        <authorList>
            <person name="Carrington J."/>
            <person name="van Aalten D."/>
        </authorList>
    </citation>
    <scope>X-RAY CRYSTALLOGRAPHY (2.51 ANGSTROMS) OF 31-154</scope>
</reference>
<evidence type="ECO:0000255" key="1"/>
<evidence type="ECO:0000269" key="2">
    <source>
    </source>
</evidence>
<evidence type="ECO:0000305" key="3"/>
<evidence type="ECO:0000312" key="4">
    <source>
        <dbReference type="EMBL" id="CAB15807.1"/>
    </source>
</evidence>
<evidence type="ECO:0007744" key="5">
    <source>
        <dbReference type="PDB" id="5MKD"/>
    </source>
</evidence>
<evidence type="ECO:0007829" key="6">
    <source>
        <dbReference type="PDB" id="5MKD"/>
    </source>
</evidence>
<feature type="signal peptide" evidence="1">
    <location>
        <begin position="1"/>
        <end position="30"/>
    </location>
</feature>
<feature type="chain" id="PRO_0000049969" description="Probable biofilm-surface layer protein B" evidence="1">
    <location>
        <begin position="31"/>
        <end position="154"/>
    </location>
</feature>
<feature type="strand" evidence="6">
    <location>
        <begin position="34"/>
        <end position="41"/>
    </location>
</feature>
<feature type="strand" evidence="6">
    <location>
        <begin position="47"/>
        <end position="56"/>
    </location>
</feature>
<feature type="strand" evidence="6">
    <location>
        <begin position="63"/>
        <end position="69"/>
    </location>
</feature>
<feature type="strand" evidence="6">
    <location>
        <begin position="80"/>
        <end position="82"/>
    </location>
</feature>
<feature type="helix" evidence="6">
    <location>
        <begin position="89"/>
        <end position="91"/>
    </location>
</feature>
<feature type="turn" evidence="6">
    <location>
        <begin position="94"/>
        <end position="97"/>
    </location>
</feature>
<feature type="strand" evidence="6">
    <location>
        <begin position="98"/>
        <end position="102"/>
    </location>
</feature>
<feature type="helix" evidence="6">
    <location>
        <begin position="105"/>
        <end position="108"/>
    </location>
</feature>
<feature type="strand" evidence="6">
    <location>
        <begin position="113"/>
        <end position="121"/>
    </location>
</feature>
<feature type="strand" evidence="6">
    <location>
        <begin position="124"/>
        <end position="137"/>
    </location>
</feature>
<feature type="strand" evidence="6">
    <location>
        <begin position="145"/>
        <end position="152"/>
    </location>
</feature>
<proteinExistence type="evidence at protein level"/>
<organism>
    <name type="scientific">Bacillus subtilis (strain 168)</name>
    <dbReference type="NCBI Taxonomy" id="224308"/>
    <lineage>
        <taxon>Bacteria</taxon>
        <taxon>Bacillati</taxon>
        <taxon>Bacillota</taxon>
        <taxon>Bacilli</taxon>
        <taxon>Bacillales</taxon>
        <taxon>Bacillaceae</taxon>
        <taxon>Bacillus</taxon>
    </lineage>
</organism>
<accession>P39632</accession>
<gene>
    <name evidence="4" type="primary">bslB</name>
    <name type="synonym">yweA</name>
    <name type="ordered locus">BSU37800</name>
    <name type="ORF">ipa-74d</name>
</gene>